<sequence>MSIMPTLDMDKDTFTQVGYLYNLLDKIGHLGLFERDLSCYMLEVLAVDSQNMREINFAHRAKNSTTDVLSFPLDVSEGADSHILAKQMKICLGSVVINYELAQKVAKQRGHSTQDEISLLFIHGFLHILGYDHEVDNGEQRALEQKIIESLGLKESLIVRNTT</sequence>
<protein>
    <recommendedName>
        <fullName evidence="1">Endoribonuclease YbeY</fullName>
        <ecNumber evidence="1">3.1.-.-</ecNumber>
    </recommendedName>
</protein>
<proteinExistence type="inferred from homology"/>
<accession>Q7VGT8</accession>
<gene>
    <name evidence="1" type="primary">ybeY</name>
    <name type="ordered locus">HH_1232</name>
</gene>
<feature type="chain" id="PRO_0000102465" description="Endoribonuclease YbeY">
    <location>
        <begin position="1"/>
        <end position="163"/>
    </location>
</feature>
<feature type="binding site" evidence="1">
    <location>
        <position position="123"/>
    </location>
    <ligand>
        <name>Zn(2+)</name>
        <dbReference type="ChEBI" id="CHEBI:29105"/>
        <note>catalytic</note>
    </ligand>
</feature>
<feature type="binding site" evidence="1">
    <location>
        <position position="127"/>
    </location>
    <ligand>
        <name>Zn(2+)</name>
        <dbReference type="ChEBI" id="CHEBI:29105"/>
        <note>catalytic</note>
    </ligand>
</feature>
<feature type="binding site" evidence="1">
    <location>
        <position position="133"/>
    </location>
    <ligand>
        <name>Zn(2+)</name>
        <dbReference type="ChEBI" id="CHEBI:29105"/>
        <note>catalytic</note>
    </ligand>
</feature>
<dbReference type="EC" id="3.1.-.-" evidence="1"/>
<dbReference type="EMBL" id="AE017125">
    <property type="protein sequence ID" value="AAP77829.1"/>
    <property type="molecule type" value="Genomic_DNA"/>
</dbReference>
<dbReference type="RefSeq" id="WP_011116072.1">
    <property type="nucleotide sequence ID" value="NC_004917.1"/>
</dbReference>
<dbReference type="SMR" id="Q7VGT8"/>
<dbReference type="STRING" id="235279.HH_1232"/>
<dbReference type="KEGG" id="hhe:HH_1232"/>
<dbReference type="eggNOG" id="COG0319">
    <property type="taxonomic scope" value="Bacteria"/>
</dbReference>
<dbReference type="HOGENOM" id="CLU_106710_3_0_7"/>
<dbReference type="OrthoDB" id="9807740at2"/>
<dbReference type="Proteomes" id="UP000002495">
    <property type="component" value="Chromosome"/>
</dbReference>
<dbReference type="GO" id="GO:0005737">
    <property type="term" value="C:cytoplasm"/>
    <property type="evidence" value="ECO:0007669"/>
    <property type="project" value="UniProtKB-SubCell"/>
</dbReference>
<dbReference type="GO" id="GO:0004222">
    <property type="term" value="F:metalloendopeptidase activity"/>
    <property type="evidence" value="ECO:0007669"/>
    <property type="project" value="InterPro"/>
</dbReference>
<dbReference type="GO" id="GO:0004521">
    <property type="term" value="F:RNA endonuclease activity"/>
    <property type="evidence" value="ECO:0007669"/>
    <property type="project" value="UniProtKB-UniRule"/>
</dbReference>
<dbReference type="GO" id="GO:0008270">
    <property type="term" value="F:zinc ion binding"/>
    <property type="evidence" value="ECO:0007669"/>
    <property type="project" value="UniProtKB-UniRule"/>
</dbReference>
<dbReference type="GO" id="GO:0006364">
    <property type="term" value="P:rRNA processing"/>
    <property type="evidence" value="ECO:0007669"/>
    <property type="project" value="UniProtKB-UniRule"/>
</dbReference>
<dbReference type="Gene3D" id="3.40.390.30">
    <property type="entry name" value="Metalloproteases ('zincins'), catalytic domain"/>
    <property type="match status" value="1"/>
</dbReference>
<dbReference type="HAMAP" id="MF_00009">
    <property type="entry name" value="Endoribonucl_YbeY"/>
    <property type="match status" value="1"/>
</dbReference>
<dbReference type="InterPro" id="IPR023091">
    <property type="entry name" value="MetalPrtase_cat_dom_sf_prd"/>
</dbReference>
<dbReference type="InterPro" id="IPR002036">
    <property type="entry name" value="YbeY"/>
</dbReference>
<dbReference type="InterPro" id="IPR020549">
    <property type="entry name" value="YbeY_CS"/>
</dbReference>
<dbReference type="NCBIfam" id="TIGR00043">
    <property type="entry name" value="rRNA maturation RNase YbeY"/>
    <property type="match status" value="1"/>
</dbReference>
<dbReference type="PANTHER" id="PTHR46986">
    <property type="entry name" value="ENDORIBONUCLEASE YBEY, CHLOROPLASTIC"/>
    <property type="match status" value="1"/>
</dbReference>
<dbReference type="PANTHER" id="PTHR46986:SF1">
    <property type="entry name" value="ENDORIBONUCLEASE YBEY, CHLOROPLASTIC"/>
    <property type="match status" value="1"/>
</dbReference>
<dbReference type="Pfam" id="PF02130">
    <property type="entry name" value="YbeY"/>
    <property type="match status" value="1"/>
</dbReference>
<dbReference type="SUPFAM" id="SSF55486">
    <property type="entry name" value="Metalloproteases ('zincins'), catalytic domain"/>
    <property type="match status" value="1"/>
</dbReference>
<dbReference type="PROSITE" id="PS01306">
    <property type="entry name" value="UPF0054"/>
    <property type="match status" value="1"/>
</dbReference>
<comment type="function">
    <text evidence="1">Single strand-specific metallo-endoribonuclease involved in late-stage 70S ribosome quality control and in maturation of the 3' terminus of the 16S rRNA.</text>
</comment>
<comment type="cofactor">
    <cofactor evidence="1">
        <name>Zn(2+)</name>
        <dbReference type="ChEBI" id="CHEBI:29105"/>
    </cofactor>
    <text evidence="1">Binds 1 zinc ion.</text>
</comment>
<comment type="subcellular location">
    <subcellularLocation>
        <location evidence="1">Cytoplasm</location>
    </subcellularLocation>
</comment>
<comment type="similarity">
    <text evidence="1">Belongs to the endoribonuclease YbeY family.</text>
</comment>
<reference key="1">
    <citation type="journal article" date="2003" name="Proc. Natl. Acad. Sci. U.S.A.">
        <title>The complete genome sequence of the carcinogenic bacterium Helicobacter hepaticus.</title>
        <authorList>
            <person name="Suerbaum S."/>
            <person name="Josenhans C."/>
            <person name="Sterzenbach T."/>
            <person name="Drescher B."/>
            <person name="Brandt P."/>
            <person name="Bell M."/>
            <person name="Droege M."/>
            <person name="Fartmann B."/>
            <person name="Fischer H.-P."/>
            <person name="Ge Z."/>
            <person name="Hoerster A."/>
            <person name="Holland R."/>
            <person name="Klein K."/>
            <person name="Koenig J."/>
            <person name="Macko L."/>
            <person name="Mendz G.L."/>
            <person name="Nyakatura G."/>
            <person name="Schauer D.B."/>
            <person name="Shen Z."/>
            <person name="Weber J."/>
            <person name="Frosch M."/>
            <person name="Fox J.G."/>
        </authorList>
    </citation>
    <scope>NUCLEOTIDE SEQUENCE [LARGE SCALE GENOMIC DNA]</scope>
    <source>
        <strain>ATCC 51449 / 3B1</strain>
    </source>
</reference>
<name>YBEY_HELHP</name>
<organism>
    <name type="scientific">Helicobacter hepaticus (strain ATCC 51449 / 3B1)</name>
    <dbReference type="NCBI Taxonomy" id="235279"/>
    <lineage>
        <taxon>Bacteria</taxon>
        <taxon>Pseudomonadati</taxon>
        <taxon>Campylobacterota</taxon>
        <taxon>Epsilonproteobacteria</taxon>
        <taxon>Campylobacterales</taxon>
        <taxon>Helicobacteraceae</taxon>
        <taxon>Helicobacter</taxon>
    </lineage>
</organism>
<keyword id="KW-0963">Cytoplasm</keyword>
<keyword id="KW-0255">Endonuclease</keyword>
<keyword id="KW-0378">Hydrolase</keyword>
<keyword id="KW-0479">Metal-binding</keyword>
<keyword id="KW-0540">Nuclease</keyword>
<keyword id="KW-1185">Reference proteome</keyword>
<keyword id="KW-0690">Ribosome biogenesis</keyword>
<keyword id="KW-0698">rRNA processing</keyword>
<keyword id="KW-0862">Zinc</keyword>
<evidence type="ECO:0000255" key="1">
    <source>
        <dbReference type="HAMAP-Rule" id="MF_00009"/>
    </source>
</evidence>